<feature type="chain" id="PRO_1000085819" description="CCA-adding enzyme">
    <location>
        <begin position="1"/>
        <end position="376"/>
    </location>
</feature>
<feature type="binding site" evidence="1">
    <location>
        <position position="23"/>
    </location>
    <ligand>
        <name>ATP</name>
        <dbReference type="ChEBI" id="CHEBI:30616"/>
    </ligand>
</feature>
<feature type="binding site" evidence="1">
    <location>
        <position position="23"/>
    </location>
    <ligand>
        <name>CTP</name>
        <dbReference type="ChEBI" id="CHEBI:37563"/>
    </ligand>
</feature>
<feature type="binding site" evidence="1">
    <location>
        <position position="26"/>
    </location>
    <ligand>
        <name>ATP</name>
        <dbReference type="ChEBI" id="CHEBI:30616"/>
    </ligand>
</feature>
<feature type="binding site" evidence="1">
    <location>
        <position position="26"/>
    </location>
    <ligand>
        <name>CTP</name>
        <dbReference type="ChEBI" id="CHEBI:37563"/>
    </ligand>
</feature>
<feature type="binding site" evidence="1">
    <location>
        <position position="36"/>
    </location>
    <ligand>
        <name>Mg(2+)</name>
        <dbReference type="ChEBI" id="CHEBI:18420"/>
    </ligand>
</feature>
<feature type="binding site" evidence="1">
    <location>
        <position position="38"/>
    </location>
    <ligand>
        <name>Mg(2+)</name>
        <dbReference type="ChEBI" id="CHEBI:18420"/>
    </ligand>
</feature>
<feature type="binding site" evidence="1">
    <location>
        <position position="106"/>
    </location>
    <ligand>
        <name>ATP</name>
        <dbReference type="ChEBI" id="CHEBI:30616"/>
    </ligand>
</feature>
<feature type="binding site" evidence="1">
    <location>
        <position position="106"/>
    </location>
    <ligand>
        <name>CTP</name>
        <dbReference type="ChEBI" id="CHEBI:37563"/>
    </ligand>
</feature>
<feature type="binding site" evidence="1">
    <location>
        <position position="152"/>
    </location>
    <ligand>
        <name>ATP</name>
        <dbReference type="ChEBI" id="CHEBI:30616"/>
    </ligand>
</feature>
<feature type="binding site" evidence="1">
    <location>
        <position position="152"/>
    </location>
    <ligand>
        <name>CTP</name>
        <dbReference type="ChEBI" id="CHEBI:37563"/>
    </ligand>
</feature>
<feature type="binding site" evidence="1">
    <location>
        <position position="155"/>
    </location>
    <ligand>
        <name>ATP</name>
        <dbReference type="ChEBI" id="CHEBI:30616"/>
    </ligand>
</feature>
<feature type="binding site" evidence="1">
    <location>
        <position position="155"/>
    </location>
    <ligand>
        <name>CTP</name>
        <dbReference type="ChEBI" id="CHEBI:37563"/>
    </ligand>
</feature>
<gene>
    <name evidence="1" type="primary">cca</name>
    <name type="ordered locus">COXBURSA331_A2026</name>
</gene>
<comment type="function">
    <text evidence="1">Catalyzes the addition and repair of the essential 3'-terminal CCA sequence in tRNAs without using a nucleic acid template. Adds these three nucleotides in the order of C, C, and A to the tRNA nucleotide-73, using CTP and ATP as substrates and producing inorganic pyrophosphate. tRNA 3'-terminal CCA addition is required both for tRNA processing and repair. Also involved in tRNA surveillance by mediating tandem CCA addition to generate a CCACCA at the 3' terminus of unstable tRNAs. While stable tRNAs receive only 3'-terminal CCA, unstable tRNAs are marked with CCACCA and rapidly degraded.</text>
</comment>
<comment type="catalytic activity">
    <reaction evidence="1">
        <text>a tRNA precursor + 2 CTP + ATP = a tRNA with a 3' CCA end + 3 diphosphate</text>
        <dbReference type="Rhea" id="RHEA:14433"/>
        <dbReference type="Rhea" id="RHEA-COMP:10465"/>
        <dbReference type="Rhea" id="RHEA-COMP:10468"/>
        <dbReference type="ChEBI" id="CHEBI:30616"/>
        <dbReference type="ChEBI" id="CHEBI:33019"/>
        <dbReference type="ChEBI" id="CHEBI:37563"/>
        <dbReference type="ChEBI" id="CHEBI:74896"/>
        <dbReference type="ChEBI" id="CHEBI:83071"/>
        <dbReference type="EC" id="2.7.7.72"/>
    </reaction>
</comment>
<comment type="catalytic activity">
    <reaction evidence="1">
        <text>a tRNA with a 3' CCA end + 2 CTP + ATP = a tRNA with a 3' CCACCA end + 3 diphosphate</text>
        <dbReference type="Rhea" id="RHEA:76235"/>
        <dbReference type="Rhea" id="RHEA-COMP:10468"/>
        <dbReference type="Rhea" id="RHEA-COMP:18655"/>
        <dbReference type="ChEBI" id="CHEBI:30616"/>
        <dbReference type="ChEBI" id="CHEBI:33019"/>
        <dbReference type="ChEBI" id="CHEBI:37563"/>
        <dbReference type="ChEBI" id="CHEBI:83071"/>
        <dbReference type="ChEBI" id="CHEBI:195187"/>
    </reaction>
    <physiologicalReaction direction="left-to-right" evidence="1">
        <dbReference type="Rhea" id="RHEA:76236"/>
    </physiologicalReaction>
</comment>
<comment type="cofactor">
    <cofactor evidence="1">
        <name>Mg(2+)</name>
        <dbReference type="ChEBI" id="CHEBI:18420"/>
    </cofactor>
</comment>
<comment type="miscellaneous">
    <text evidence="1">A single active site specifically recognizes both ATP and CTP and is responsible for their addition.</text>
</comment>
<comment type="similarity">
    <text evidence="1">Belongs to the tRNA nucleotidyltransferase/poly(A) polymerase family. Bacterial CCA-adding enzyme type 2 subfamily.</text>
</comment>
<accession>A9NAS1</accession>
<organism>
    <name type="scientific">Coxiella burnetii (strain RSA 331 / Henzerling II)</name>
    <dbReference type="NCBI Taxonomy" id="360115"/>
    <lineage>
        <taxon>Bacteria</taxon>
        <taxon>Pseudomonadati</taxon>
        <taxon>Pseudomonadota</taxon>
        <taxon>Gammaproteobacteria</taxon>
        <taxon>Legionellales</taxon>
        <taxon>Coxiellaceae</taxon>
        <taxon>Coxiella</taxon>
    </lineage>
</organism>
<dbReference type="EC" id="2.7.7.72" evidence="1"/>
<dbReference type="EMBL" id="CP000890">
    <property type="protein sequence ID" value="ABX78173.1"/>
    <property type="molecule type" value="Genomic_DNA"/>
</dbReference>
<dbReference type="SMR" id="A9NAS1"/>
<dbReference type="KEGG" id="cbs:COXBURSA331_A2026"/>
<dbReference type="HOGENOM" id="CLU_015961_1_0_6"/>
<dbReference type="GO" id="GO:0005524">
    <property type="term" value="F:ATP binding"/>
    <property type="evidence" value="ECO:0007669"/>
    <property type="project" value="UniProtKB-UniRule"/>
</dbReference>
<dbReference type="GO" id="GO:0004810">
    <property type="term" value="F:CCA tRNA nucleotidyltransferase activity"/>
    <property type="evidence" value="ECO:0007669"/>
    <property type="project" value="UniProtKB-UniRule"/>
</dbReference>
<dbReference type="GO" id="GO:0000287">
    <property type="term" value="F:magnesium ion binding"/>
    <property type="evidence" value="ECO:0007669"/>
    <property type="project" value="UniProtKB-UniRule"/>
</dbReference>
<dbReference type="GO" id="GO:0000049">
    <property type="term" value="F:tRNA binding"/>
    <property type="evidence" value="ECO:0007669"/>
    <property type="project" value="UniProtKB-UniRule"/>
</dbReference>
<dbReference type="GO" id="GO:0042245">
    <property type="term" value="P:RNA repair"/>
    <property type="evidence" value="ECO:0007669"/>
    <property type="project" value="UniProtKB-KW"/>
</dbReference>
<dbReference type="GO" id="GO:0001680">
    <property type="term" value="P:tRNA 3'-terminal CCA addition"/>
    <property type="evidence" value="ECO:0007669"/>
    <property type="project" value="UniProtKB-UniRule"/>
</dbReference>
<dbReference type="CDD" id="cd05398">
    <property type="entry name" value="NT_ClassII-CCAase"/>
    <property type="match status" value="1"/>
</dbReference>
<dbReference type="FunFam" id="3.30.460.10:FF:000016">
    <property type="entry name" value="Multifunctional CCA protein"/>
    <property type="match status" value="1"/>
</dbReference>
<dbReference type="Gene3D" id="3.30.460.10">
    <property type="entry name" value="Beta Polymerase, domain 2"/>
    <property type="match status" value="1"/>
</dbReference>
<dbReference type="Gene3D" id="1.10.3090.10">
    <property type="entry name" value="cca-adding enzyme, domain 2"/>
    <property type="match status" value="1"/>
</dbReference>
<dbReference type="HAMAP" id="MF_01262">
    <property type="entry name" value="CCA_bact_type2"/>
    <property type="match status" value="1"/>
</dbReference>
<dbReference type="InterPro" id="IPR012006">
    <property type="entry name" value="CCA_bact"/>
</dbReference>
<dbReference type="InterPro" id="IPR043519">
    <property type="entry name" value="NT_sf"/>
</dbReference>
<dbReference type="InterPro" id="IPR002646">
    <property type="entry name" value="PolA_pol_head_dom"/>
</dbReference>
<dbReference type="InterPro" id="IPR032828">
    <property type="entry name" value="PolyA_RNA-bd"/>
</dbReference>
<dbReference type="InterPro" id="IPR050124">
    <property type="entry name" value="tRNA_CCA-adding_enzyme"/>
</dbReference>
<dbReference type="PANTHER" id="PTHR47545">
    <property type="entry name" value="MULTIFUNCTIONAL CCA PROTEIN"/>
    <property type="match status" value="1"/>
</dbReference>
<dbReference type="PANTHER" id="PTHR47545:SF1">
    <property type="entry name" value="MULTIFUNCTIONAL CCA PROTEIN"/>
    <property type="match status" value="1"/>
</dbReference>
<dbReference type="Pfam" id="PF01743">
    <property type="entry name" value="PolyA_pol"/>
    <property type="match status" value="1"/>
</dbReference>
<dbReference type="Pfam" id="PF12627">
    <property type="entry name" value="PolyA_pol_RNAbd"/>
    <property type="match status" value="1"/>
</dbReference>
<dbReference type="PIRSF" id="PIRSF000813">
    <property type="entry name" value="CCA_bact"/>
    <property type="match status" value="1"/>
</dbReference>
<dbReference type="SUPFAM" id="SSF81301">
    <property type="entry name" value="Nucleotidyltransferase"/>
    <property type="match status" value="1"/>
</dbReference>
<dbReference type="SUPFAM" id="SSF81891">
    <property type="entry name" value="Poly A polymerase C-terminal region-like"/>
    <property type="match status" value="1"/>
</dbReference>
<name>CCA_COXBR</name>
<evidence type="ECO:0000255" key="1">
    <source>
        <dbReference type="HAMAP-Rule" id="MF_01262"/>
    </source>
</evidence>
<reference key="1">
    <citation type="submission" date="2007-11" db="EMBL/GenBank/DDBJ databases">
        <title>Genome sequencing of phylogenetically and phenotypically diverse Coxiella burnetii isolates.</title>
        <authorList>
            <person name="Seshadri R."/>
            <person name="Samuel J.E."/>
        </authorList>
    </citation>
    <scope>NUCLEOTIDE SEQUENCE [LARGE SCALE GENOMIC DNA]</scope>
    <source>
        <strain>RSA 331 / Henzerling II</strain>
    </source>
</reference>
<sequence>MLVFYGFLSSRSISHLKVYLVGGAVRDQLLGLPVKEKDWVVVGATPEEMTARGFKPVGKEFPVFLHPETHEEYALARTERKVAKGYKGFTFYAAPDVSLEEDLKRRDLTINAIAETPEGQLIDPYGGQEDLKNKVLRHVSVAFQEDPVRVLRLARLATKFPDFSIHPDTLELMKKMVCAGEIDALVPERIWQELNRALGNEKPTRFFTVLNQCGALAILFPEIKMEGKGMAALQSVTDKTPSPLIRFATLQSDLPPEIIQKLAGRYRVPNEYADLAILVARFGSDYVNLNRMDETSLLNFLLKTDALRRQERFDQFIFTCDLISSTTSSQPKKIKEIIKAVKSVDIKPLQEKQLKGEAFAKALEKLRLEAIRTLIS</sequence>
<protein>
    <recommendedName>
        <fullName evidence="1">CCA-adding enzyme</fullName>
        <ecNumber evidence="1">2.7.7.72</ecNumber>
    </recommendedName>
    <alternativeName>
        <fullName evidence="1">CCA tRNA nucleotidyltransferase</fullName>
    </alternativeName>
    <alternativeName>
        <fullName evidence="1">tRNA CCA-pyrophosphorylase</fullName>
    </alternativeName>
    <alternativeName>
        <fullName evidence="1">tRNA adenylyl-/cytidylyl- transferase</fullName>
    </alternativeName>
    <alternativeName>
        <fullName evidence="1">tRNA nucleotidyltransferase</fullName>
    </alternativeName>
    <alternativeName>
        <fullName evidence="1">tRNA-NT</fullName>
    </alternativeName>
</protein>
<proteinExistence type="inferred from homology"/>
<keyword id="KW-0067">ATP-binding</keyword>
<keyword id="KW-0460">Magnesium</keyword>
<keyword id="KW-0479">Metal-binding</keyword>
<keyword id="KW-0547">Nucleotide-binding</keyword>
<keyword id="KW-0548">Nucleotidyltransferase</keyword>
<keyword id="KW-0692">RNA repair</keyword>
<keyword id="KW-0694">RNA-binding</keyword>
<keyword id="KW-0808">Transferase</keyword>
<keyword id="KW-0819">tRNA processing</keyword>